<reference evidence="19 20" key="1">
    <citation type="journal article" date="2018" name="PLoS ONE">
        <title>Proteomic endorsed transcriptomic profiles of venom glands from Tityus obscurus and T. serrulatus scorpions.</title>
        <authorList>
            <person name="de Oliveira U.C."/>
            <person name="Nishiyama M.Y. Jr."/>
            <person name="Dos Santos M.B.V."/>
            <person name="Santos-da-Silva A.P."/>
            <person name="Chalkidis H.M."/>
            <person name="Souza-Imberg A."/>
            <person name="Candido D.M."/>
            <person name="Yamanouye N."/>
            <person name="Dorce V.A.C."/>
            <person name="Junqueira-de-Azevedo I.L.M."/>
        </authorList>
    </citation>
    <scope>NUCLEOTIDE SEQUENCE [MRNA]</scope>
    <source>
        <tissue>Telson</tissue>
    </source>
</reference>
<reference evidence="21" key="2">
    <citation type="journal article" date="2021" name="Toxicon">
        <title>Novel components of Tityus serrulatus venom: a transcriptomic approach.</title>
        <authorList>
            <person name="Kalapothakis Y."/>
            <person name="Miranda K."/>
            <person name="Pereira A.H."/>
            <person name="Witt A.S.A."/>
            <person name="Marani C."/>
            <person name="Martins A.P."/>
            <person name="Leal H.G."/>
            <person name="Campos-Junior E."/>
            <person name="Pimenta A.M.C."/>
            <person name="Borges A."/>
            <person name="Chavez-Olortegui C."/>
            <person name="Kalapothakis E."/>
        </authorList>
    </citation>
    <scope>NUCLEOTIDE SEQUENCE [MRNA]</scope>
    <source>
        <tissue>Telson</tissue>
    </source>
</reference>
<reference key="3">
    <citation type="journal article" date="1991" name="J. Biol. Chem.">
        <title>Discharge effect on pancreatic exocrine secretion produced by toxins purified from Tityus serrulatus scorpion venom.</title>
        <authorList>
            <person name="Possani L.D."/>
            <person name="Martin B.M."/>
            <person name="Fletcher M.D."/>
            <person name="Fletcher P.L. Jr."/>
        </authorList>
    </citation>
    <scope>PROTEIN SEQUENCE OF 21-82</scope>
    <scope>SUBCELLULAR LOCATION</scope>
    <source>
        <tissue>Venom</tissue>
    </source>
</reference>
<reference key="4">
    <citation type="journal article" date="1992" name="Nat. Toxins">
        <title>The beta-type toxin Ts II from the scorpion Tityus serrulatus: amino acid sequence determination and assessment of biological and antigenic properties.</title>
        <authorList>
            <person name="Mansuelle P."/>
            <person name="Martin-Eauclaire M.-F."/>
            <person name="Chavez-Olortegui C."/>
            <person name="de Lima M.E."/>
            <person name="Rochat H."/>
            <person name="Granier C."/>
        </authorList>
    </citation>
    <scope>PROTEIN SEQUENCE OF 21-82</scope>
    <scope>FUNCTION</scope>
    <scope>SUBCELLULAR LOCATION</scope>
    <scope>AMIDATION AT CYS-82</scope>
    <scope>TOXIC DOSE</scope>
    <source>
        <tissue>Venom</tissue>
    </source>
</reference>
<reference key="5">
    <citation type="journal article" date="2012" name="FEBS J.">
        <title>Investigation of the relationship between the structure and function of Ts2, a neurotoxin from Tityus serrulatus venom.</title>
        <authorList>
            <person name="Cologna C.T."/>
            <person name="Peigneur S."/>
            <person name="Rustiguel J.K."/>
            <person name="Nonato M.C."/>
            <person name="Tytgat J."/>
            <person name="Arantes E.C."/>
        </authorList>
    </citation>
    <scope>PROTEIN SEQUENCE OF 21-82</scope>
    <scope>FUNCTION</scope>
    <scope>SUBCELLULAR LOCATION</scope>
    <scope>MASS SPECTROMETRY</scope>
    <scope>3D-STRUCTURE MODELING</scope>
</reference>
<reference key="6">
    <citation type="journal article" date="2014" name="Toxicon">
        <title>Influence of post-starvation extraction time and prey-specific diet in Tityus serrulatus scorpion venom composition and hyaluronidase activity.</title>
        <authorList>
            <person name="Pucca M.B."/>
            <person name="Amorim F.G."/>
            <person name="Cerni F.A."/>
            <person name="Bordon K.C.F."/>
            <person name="Cardoso I.A."/>
            <person name="Anjolette F.A."/>
            <person name="Arantes E.C."/>
        </authorList>
    </citation>
    <scope>PROTEIN SEQUENCE OF 21-40</scope>
    <scope>SUBCELLULAR LOCATION</scope>
    <source>
        <tissue evidence="12">Venom</tissue>
    </source>
</reference>
<reference key="7">
    <citation type="journal article" date="1991" name="Toxicon">
        <title>Further characterization of toxins T1IV (TsTX-III) and T2IV from Tityus serrulatus scorpion venom.</title>
        <authorList>
            <person name="Sampaio S.V."/>
            <person name="Arantes E.C."/>
            <person name="Prado W.A."/>
            <person name="Riccioppo Neto F."/>
            <person name="Giglio J.R."/>
        </authorList>
    </citation>
    <scope>PROTEIN SEQUENCE OF 21-34</scope>
    <scope>FUNCTION</scope>
    <scope>TOXIC DOSE</scope>
    <source>
        <tissue>Venom</tissue>
    </source>
</reference>
<reference key="8">
    <citation type="journal article" date="2011" name="Toxicon">
        <title>Tityus serrulatus venom and toxins Ts1, Ts2 and Ts6 induce macrophage activation and production of immune mediators.</title>
        <authorList>
            <person name="Zoccal K.F."/>
            <person name="Bitencourt C.S."/>
            <person name="Secatto A."/>
            <person name="Sorgi C.A."/>
            <person name="Bordon K.C."/>
            <person name="Sampaio S.V."/>
            <person name="Arantes E.C."/>
            <person name="Faccioli L.H."/>
        </authorList>
    </citation>
    <scope>FUNCTION</scope>
    <source>
        <tissue>Venom</tissue>
    </source>
</reference>
<reference key="9">
    <citation type="journal article" date="2013" name="Toxicon">
        <title>Ts6 and Ts2 from Tityus serrulatus venom induce inflammation by mechanisms dependent on lipid mediators and cytokine production.</title>
        <authorList>
            <person name="Zoccal K.F."/>
            <person name="Bitencourt C.S."/>
            <person name="Sorgi C.A."/>
            <person name="Bordon K.C."/>
            <person name="Sampaio S.V."/>
            <person name="Arantes E.C."/>
            <person name="Faccioli L.H."/>
        </authorList>
    </citation>
    <scope>FUNCTION</scope>
    <source>
        <tissue>Venom</tissue>
    </source>
</reference>
<reference key="10">
    <citation type="journal article" date="2009" name="Protein Pept. Lett.">
        <title>Tityus serrulatus scorpion venom and toxins: an overview.</title>
        <authorList>
            <person name="Cologna C.T."/>
            <person name="Marcussi S."/>
            <person name="Giglio J.R."/>
            <person name="Soares A.M."/>
            <person name="Arantes E.C."/>
        </authorList>
    </citation>
    <scope>NOMENCLATURE</scope>
</reference>
<reference key="11">
    <citation type="journal article" date="2012" name="PLoS ONE">
        <title>Identification and phylogenetic analysis of Tityus pachyurus and Tityus obscurus novel putative Na+-channel scorpion toxins.</title>
        <authorList>
            <person name="Guerrero-Vargas J.A."/>
            <person name="Mourao C.B."/>
            <person name="Quintero-Hernandez V."/>
            <person name="Possani L.D."/>
            <person name="Schwartz E.F."/>
        </authorList>
    </citation>
    <scope>NOMENCLATURE</scope>
</reference>
<comment type="function">
    <text evidence="3 4 6 7 8">Alpha toxins bind voltage-independently at site-3 of sodium channels (Nav) and inhibit the inactivation of the activated channels, thereby blocking neuronal transmission. This toxin acts on Nav1.2/SCN2A, Nav1.3/SCN3A, Nav1.5/SCN5A, Nav1.6/SCN8A and Nav1.7/SCN9A voltage-gated sodium channels, with the highest affinity for Nav1.3/SCN3A, followed by Nav1.6/SCN8A and Nav1.7/SCN9A which are affected almost equally. Interestingly, shows a significant shift of the voltage dependence of activation for Nav1.3/SCN3A that is characteristic of beta-toxins (PubMed:21549737). In addition, in presence of LPS, this toxin inhibits the release of NO, IL-6 and TNF-alpha in J774.1 cells (PubMed:21549737). Further, in the absence of LPS, it stimulates the production of the anti-inflammatory cytokine IL-10 (PubMed:21549737, PubMed:23085190). This toxin is active on mammals.</text>
</comment>
<comment type="subcellular location">
    <subcellularLocation>
        <location evidence="3 4 5 7 9">Secreted</location>
    </subcellularLocation>
</comment>
<comment type="tissue specificity">
    <text evidence="18">Expressed by the venom gland.</text>
</comment>
<comment type="domain">
    <text evidence="13">Has the structural arrangement of an alpha-helix connected to antiparallel beta-sheets by disulfide bonds (CS-alpha/beta).</text>
</comment>
<comment type="mass spectrometry"/>
<comment type="toxic dose">
    <text evidence="3 4">LD(50) is 6 ng by intracerebroventricular injection into mice (PubMed:1344906) and 12.9 +- 1.6 ug/kg when intracisternally injected into mice (PubMed:1926167).</text>
</comment>
<comment type="miscellaneous">
    <text evidence="17">Negative results: does not affect Nav1.4/SCN4A, Nav1.8/SCN10A and DmNa1/para.</text>
</comment>
<comment type="similarity">
    <text evidence="13">Belongs to the long (4 C-C) scorpion toxin superfamily. Sodium channel inhibitor family. Beta subfamily.</text>
</comment>
<comment type="caution">
    <text evidence="13">This toxin is functionally similar to alpha toxins and structurally similar to beta toxins.</text>
</comment>
<name>SCX2_TITSE</name>
<accession>P68410</accession>
<accession>A0A218QWV5</accession>
<accession>P23814</accession>
<protein>
    <recommendedName>
        <fullName evidence="10">Alpha-mammal toxin Ts2</fullName>
    </recommendedName>
    <alternativeName>
        <fullName>P-Mice-beta* NaTx5.1</fullName>
    </alternativeName>
    <alternativeName>
        <fullName>Tityustoxin II</fullName>
        <shortName>Toxin II</shortName>
        <shortName>TsTX-II</shortName>
        <shortName>Tst2</shortName>
    </alternativeName>
    <alternativeName>
        <fullName>Toxin T1-IV</fullName>
    </alternativeName>
    <alternativeName>
        <fullName evidence="11">TsTX III-8</fullName>
    </alternativeName>
    <alternativeName>
        <fullName>TsTX-III</fullName>
    </alternativeName>
</protein>
<sequence>MKGFLLFISILMMIGTIVVGKEGYAMDHEGCKFSCFIRPAGFCDGYCKTHLKASSGYCAWPACYCYGVPDHIKVWDYATNKCGK</sequence>
<organism>
    <name type="scientific">Tityus serrulatus</name>
    <name type="common">Brazilian scorpion</name>
    <dbReference type="NCBI Taxonomy" id="6887"/>
    <lineage>
        <taxon>Eukaryota</taxon>
        <taxon>Metazoa</taxon>
        <taxon>Ecdysozoa</taxon>
        <taxon>Arthropoda</taxon>
        <taxon>Chelicerata</taxon>
        <taxon>Arachnida</taxon>
        <taxon>Scorpiones</taxon>
        <taxon>Buthida</taxon>
        <taxon>Buthoidea</taxon>
        <taxon>Buthidae</taxon>
        <taxon>Tityus</taxon>
    </lineage>
</organism>
<keyword id="KW-0027">Amidation</keyword>
<keyword id="KW-0903">Direct protein sequencing</keyword>
<keyword id="KW-1015">Disulfide bond</keyword>
<keyword id="KW-0872">Ion channel impairing toxin</keyword>
<keyword id="KW-0528">Neurotoxin</keyword>
<keyword id="KW-0964">Secreted</keyword>
<keyword id="KW-0732">Signal</keyword>
<keyword id="KW-0800">Toxin</keyword>
<keyword id="KW-0738">Voltage-gated sodium channel impairing toxin</keyword>
<feature type="signal peptide" evidence="1 14 15 16 17 18">
    <location>
        <begin position="1"/>
        <end position="20"/>
    </location>
</feature>
<feature type="chain" id="PRO_0000066824" description="Alpha-mammal toxin Ts2" evidence="3 5 7">
    <location>
        <begin position="21"/>
        <end position="82"/>
    </location>
</feature>
<feature type="domain" description="LCN-type CS-alpha/beta" evidence="2">
    <location>
        <begin position="21"/>
        <end position="83"/>
    </location>
</feature>
<feature type="modified residue" description="Cysteine amide" evidence="3">
    <location>
        <position position="82"/>
    </location>
</feature>
<feature type="disulfide bond" evidence="2">
    <location>
        <begin position="31"/>
        <end position="82"/>
    </location>
</feature>
<feature type="disulfide bond" evidence="2">
    <location>
        <begin position="35"/>
        <end position="58"/>
    </location>
</feature>
<feature type="disulfide bond" evidence="2">
    <location>
        <begin position="43"/>
        <end position="63"/>
    </location>
</feature>
<feature type="disulfide bond" evidence="2">
    <location>
        <begin position="47"/>
        <end position="65"/>
    </location>
</feature>
<proteinExistence type="evidence at protein level"/>
<evidence type="ECO:0000255" key="1"/>
<evidence type="ECO:0000255" key="2">
    <source>
        <dbReference type="PROSITE-ProRule" id="PRU01210"/>
    </source>
</evidence>
<evidence type="ECO:0000269" key="3">
    <source>
    </source>
</evidence>
<evidence type="ECO:0000269" key="4">
    <source>
    </source>
</evidence>
<evidence type="ECO:0000269" key="5">
    <source>
    </source>
</evidence>
<evidence type="ECO:0000269" key="6">
    <source>
    </source>
</evidence>
<evidence type="ECO:0000269" key="7">
    <source>
    </source>
</evidence>
<evidence type="ECO:0000269" key="8">
    <source>
    </source>
</evidence>
<evidence type="ECO:0000269" key="9">
    <source>
    </source>
</evidence>
<evidence type="ECO:0000303" key="10">
    <source>
    </source>
</evidence>
<evidence type="ECO:0000303" key="11">
    <source>
    </source>
</evidence>
<evidence type="ECO:0000303" key="12">
    <source>
    </source>
</evidence>
<evidence type="ECO:0000305" key="13"/>
<evidence type="ECO:0000305" key="14">
    <source>
    </source>
</evidence>
<evidence type="ECO:0000305" key="15">
    <source>
    </source>
</evidence>
<evidence type="ECO:0000305" key="16">
    <source>
    </source>
</evidence>
<evidence type="ECO:0000305" key="17">
    <source>
    </source>
</evidence>
<evidence type="ECO:0000305" key="18">
    <source>
    </source>
</evidence>
<evidence type="ECO:0000312" key="19">
    <source>
        <dbReference type="EMBL" id="JAW06979.1"/>
    </source>
</evidence>
<evidence type="ECO:0000312" key="20">
    <source>
        <dbReference type="EMBL" id="JAW07016.1"/>
    </source>
</evidence>
<evidence type="ECO:0000312" key="21">
    <source>
        <dbReference type="EMBL" id="QPD99042.1"/>
    </source>
</evidence>
<dbReference type="EMBL" id="GEUW01000066">
    <property type="protein sequence ID" value="JAW06979.1"/>
    <property type="molecule type" value="mRNA"/>
</dbReference>
<dbReference type="EMBL" id="GEUW01000029">
    <property type="protein sequence ID" value="JAW07016.1"/>
    <property type="molecule type" value="mRNA"/>
</dbReference>
<dbReference type="EMBL" id="MT450706">
    <property type="protein sequence ID" value="QPD99042.1"/>
    <property type="molecule type" value="mRNA"/>
</dbReference>
<dbReference type="PIR" id="B39510">
    <property type="entry name" value="B39510"/>
</dbReference>
<dbReference type="SMR" id="P68410"/>
<dbReference type="ABCD" id="P68410">
    <property type="antibodies" value="1 sequenced antibody"/>
</dbReference>
<dbReference type="GO" id="GO:0005576">
    <property type="term" value="C:extracellular region"/>
    <property type="evidence" value="ECO:0007669"/>
    <property type="project" value="UniProtKB-SubCell"/>
</dbReference>
<dbReference type="GO" id="GO:0019871">
    <property type="term" value="F:sodium channel inhibitor activity"/>
    <property type="evidence" value="ECO:0007669"/>
    <property type="project" value="InterPro"/>
</dbReference>
<dbReference type="GO" id="GO:0090729">
    <property type="term" value="F:toxin activity"/>
    <property type="evidence" value="ECO:0007669"/>
    <property type="project" value="UniProtKB-KW"/>
</dbReference>
<dbReference type="GO" id="GO:0006952">
    <property type="term" value="P:defense response"/>
    <property type="evidence" value="ECO:0007669"/>
    <property type="project" value="InterPro"/>
</dbReference>
<dbReference type="CDD" id="cd23106">
    <property type="entry name" value="neurotoxins_LC_scorpion"/>
    <property type="match status" value="1"/>
</dbReference>
<dbReference type="FunFam" id="3.30.30.10:FF:000002">
    <property type="entry name" value="Alpha-like toxin BmK-M1"/>
    <property type="match status" value="1"/>
</dbReference>
<dbReference type="Gene3D" id="3.30.30.10">
    <property type="entry name" value="Knottin, scorpion toxin-like"/>
    <property type="match status" value="1"/>
</dbReference>
<dbReference type="InterPro" id="IPR044062">
    <property type="entry name" value="LCN-type_CS_alpha_beta_dom"/>
</dbReference>
<dbReference type="InterPro" id="IPR003614">
    <property type="entry name" value="Scorpion_toxin-like"/>
</dbReference>
<dbReference type="InterPro" id="IPR036574">
    <property type="entry name" value="Scorpion_toxin-like_sf"/>
</dbReference>
<dbReference type="InterPro" id="IPR018218">
    <property type="entry name" value="Scorpion_toxinL"/>
</dbReference>
<dbReference type="InterPro" id="IPR002061">
    <property type="entry name" value="Scorpion_toxinL/defensin"/>
</dbReference>
<dbReference type="Pfam" id="PF00537">
    <property type="entry name" value="Toxin_3"/>
    <property type="match status" value="1"/>
</dbReference>
<dbReference type="PRINTS" id="PR00285">
    <property type="entry name" value="SCORPNTOXIN"/>
</dbReference>
<dbReference type="SMART" id="SM00505">
    <property type="entry name" value="Knot1"/>
    <property type="match status" value="1"/>
</dbReference>
<dbReference type="SUPFAM" id="SSF57095">
    <property type="entry name" value="Scorpion toxin-like"/>
    <property type="match status" value="1"/>
</dbReference>
<dbReference type="PROSITE" id="PS51863">
    <property type="entry name" value="LCN_CSAB"/>
    <property type="match status" value="1"/>
</dbReference>